<protein>
    <recommendedName>
        <fullName evidence="1">Argininosuccinate synthase</fullName>
        <ecNumber evidence="1">6.3.4.5</ecNumber>
    </recommendedName>
    <alternativeName>
        <fullName evidence="1">Citrulline--aspartate ligase</fullName>
    </alternativeName>
</protein>
<reference key="1">
    <citation type="journal article" date="2008" name="Appl. Environ. Microbiol.">
        <title>Genome of the epsilonproteobacterial chemolithoautotroph Sulfurimonas denitrificans.</title>
        <authorList>
            <person name="Sievert S.M."/>
            <person name="Scott K.M."/>
            <person name="Klotz M.G."/>
            <person name="Chain P.S.G."/>
            <person name="Hauser L.J."/>
            <person name="Hemp J."/>
            <person name="Huegler M."/>
            <person name="Land M."/>
            <person name="Lapidus A."/>
            <person name="Larimer F.W."/>
            <person name="Lucas S."/>
            <person name="Malfatti S.A."/>
            <person name="Meyer F."/>
            <person name="Paulsen I.T."/>
            <person name="Ren Q."/>
            <person name="Simon J."/>
            <person name="Bailey K."/>
            <person name="Diaz E."/>
            <person name="Fitzpatrick K.A."/>
            <person name="Glover B."/>
            <person name="Gwatney N."/>
            <person name="Korajkic A."/>
            <person name="Long A."/>
            <person name="Mobberley J.M."/>
            <person name="Pantry S.N."/>
            <person name="Pazder G."/>
            <person name="Peterson S."/>
            <person name="Quintanilla J.D."/>
            <person name="Sprinkle R."/>
            <person name="Stephens J."/>
            <person name="Thomas P."/>
            <person name="Vaughn R."/>
            <person name="Weber M.J."/>
            <person name="Wooten L.L."/>
        </authorList>
    </citation>
    <scope>NUCLEOTIDE SEQUENCE [LARGE SCALE GENOMIC DNA]</scope>
    <source>
        <strain>ATCC 33889 / DSM 1251</strain>
    </source>
</reference>
<dbReference type="EC" id="6.3.4.5" evidence="1"/>
<dbReference type="EMBL" id="CP000153">
    <property type="protein sequence ID" value="ABB44650.1"/>
    <property type="molecule type" value="Genomic_DNA"/>
</dbReference>
<dbReference type="RefSeq" id="WP_011373002.1">
    <property type="nucleotide sequence ID" value="NC_007575.1"/>
</dbReference>
<dbReference type="SMR" id="Q30QT1"/>
<dbReference type="STRING" id="326298.Suden_1373"/>
<dbReference type="KEGG" id="tdn:Suden_1373"/>
<dbReference type="eggNOG" id="COG0137">
    <property type="taxonomic scope" value="Bacteria"/>
</dbReference>
<dbReference type="HOGENOM" id="CLU_032784_4_2_7"/>
<dbReference type="OrthoDB" id="9801641at2"/>
<dbReference type="UniPathway" id="UPA00068">
    <property type="reaction ID" value="UER00113"/>
</dbReference>
<dbReference type="Proteomes" id="UP000002714">
    <property type="component" value="Chromosome"/>
</dbReference>
<dbReference type="GO" id="GO:0005737">
    <property type="term" value="C:cytoplasm"/>
    <property type="evidence" value="ECO:0007669"/>
    <property type="project" value="UniProtKB-SubCell"/>
</dbReference>
<dbReference type="GO" id="GO:0004055">
    <property type="term" value="F:argininosuccinate synthase activity"/>
    <property type="evidence" value="ECO:0007669"/>
    <property type="project" value="UniProtKB-UniRule"/>
</dbReference>
<dbReference type="GO" id="GO:0005524">
    <property type="term" value="F:ATP binding"/>
    <property type="evidence" value="ECO:0007669"/>
    <property type="project" value="UniProtKB-UniRule"/>
</dbReference>
<dbReference type="GO" id="GO:0000053">
    <property type="term" value="P:argininosuccinate metabolic process"/>
    <property type="evidence" value="ECO:0007669"/>
    <property type="project" value="TreeGrafter"/>
</dbReference>
<dbReference type="GO" id="GO:0006526">
    <property type="term" value="P:L-arginine biosynthetic process"/>
    <property type="evidence" value="ECO:0007669"/>
    <property type="project" value="UniProtKB-UniRule"/>
</dbReference>
<dbReference type="GO" id="GO:0000050">
    <property type="term" value="P:urea cycle"/>
    <property type="evidence" value="ECO:0007669"/>
    <property type="project" value="TreeGrafter"/>
</dbReference>
<dbReference type="CDD" id="cd01999">
    <property type="entry name" value="ASS"/>
    <property type="match status" value="1"/>
</dbReference>
<dbReference type="FunFam" id="3.40.50.620:FF:000019">
    <property type="entry name" value="Argininosuccinate synthase"/>
    <property type="match status" value="1"/>
</dbReference>
<dbReference type="FunFam" id="3.90.1260.10:FF:000007">
    <property type="entry name" value="Argininosuccinate synthase"/>
    <property type="match status" value="1"/>
</dbReference>
<dbReference type="Gene3D" id="3.90.1260.10">
    <property type="entry name" value="Argininosuccinate synthetase, chain A, domain 2"/>
    <property type="match status" value="1"/>
</dbReference>
<dbReference type="Gene3D" id="3.40.50.620">
    <property type="entry name" value="HUPs"/>
    <property type="match status" value="1"/>
</dbReference>
<dbReference type="Gene3D" id="1.20.5.470">
    <property type="entry name" value="Single helix bin"/>
    <property type="match status" value="1"/>
</dbReference>
<dbReference type="HAMAP" id="MF_00005">
    <property type="entry name" value="Arg_succ_synth_type1"/>
    <property type="match status" value="1"/>
</dbReference>
<dbReference type="InterPro" id="IPR048268">
    <property type="entry name" value="Arginosuc_syn_C"/>
</dbReference>
<dbReference type="InterPro" id="IPR048267">
    <property type="entry name" value="Arginosuc_syn_N"/>
</dbReference>
<dbReference type="InterPro" id="IPR001518">
    <property type="entry name" value="Arginosuc_synth"/>
</dbReference>
<dbReference type="InterPro" id="IPR018223">
    <property type="entry name" value="Arginosuc_synth_CS"/>
</dbReference>
<dbReference type="InterPro" id="IPR023434">
    <property type="entry name" value="Arginosuc_synth_type_1_subfam"/>
</dbReference>
<dbReference type="InterPro" id="IPR024074">
    <property type="entry name" value="AS_cat/multimer_dom_body"/>
</dbReference>
<dbReference type="InterPro" id="IPR014729">
    <property type="entry name" value="Rossmann-like_a/b/a_fold"/>
</dbReference>
<dbReference type="NCBIfam" id="TIGR00032">
    <property type="entry name" value="argG"/>
    <property type="match status" value="1"/>
</dbReference>
<dbReference type="NCBIfam" id="NF001770">
    <property type="entry name" value="PRK00509.1"/>
    <property type="match status" value="1"/>
</dbReference>
<dbReference type="PANTHER" id="PTHR11587">
    <property type="entry name" value="ARGININOSUCCINATE SYNTHASE"/>
    <property type="match status" value="1"/>
</dbReference>
<dbReference type="PANTHER" id="PTHR11587:SF2">
    <property type="entry name" value="ARGININOSUCCINATE SYNTHASE"/>
    <property type="match status" value="1"/>
</dbReference>
<dbReference type="Pfam" id="PF20979">
    <property type="entry name" value="Arginosuc_syn_C"/>
    <property type="match status" value="1"/>
</dbReference>
<dbReference type="Pfam" id="PF00764">
    <property type="entry name" value="Arginosuc_synth"/>
    <property type="match status" value="1"/>
</dbReference>
<dbReference type="SUPFAM" id="SSF52402">
    <property type="entry name" value="Adenine nucleotide alpha hydrolases-like"/>
    <property type="match status" value="1"/>
</dbReference>
<dbReference type="SUPFAM" id="SSF69864">
    <property type="entry name" value="Argininosuccinate synthetase, C-terminal domain"/>
    <property type="match status" value="1"/>
</dbReference>
<dbReference type="PROSITE" id="PS00564">
    <property type="entry name" value="ARGININOSUCCIN_SYN_1"/>
    <property type="match status" value="1"/>
</dbReference>
<dbReference type="PROSITE" id="PS00565">
    <property type="entry name" value="ARGININOSUCCIN_SYN_2"/>
    <property type="match status" value="1"/>
</dbReference>
<gene>
    <name evidence="1" type="primary">argG</name>
    <name type="ordered locus">Suden_1373</name>
</gene>
<keyword id="KW-0028">Amino-acid biosynthesis</keyword>
<keyword id="KW-0055">Arginine biosynthesis</keyword>
<keyword id="KW-0067">ATP-binding</keyword>
<keyword id="KW-0963">Cytoplasm</keyword>
<keyword id="KW-0436">Ligase</keyword>
<keyword id="KW-0547">Nucleotide-binding</keyword>
<keyword id="KW-1185">Reference proteome</keyword>
<proteinExistence type="inferred from homology"/>
<name>ASSY_SULDN</name>
<feature type="chain" id="PRO_0000263991" description="Argininosuccinate synthase">
    <location>
        <begin position="1"/>
        <end position="404"/>
    </location>
</feature>
<feature type="binding site" evidence="1">
    <location>
        <begin position="11"/>
        <end position="19"/>
    </location>
    <ligand>
        <name>ATP</name>
        <dbReference type="ChEBI" id="CHEBI:30616"/>
    </ligand>
</feature>
<feature type="binding site" evidence="1">
    <location>
        <position position="38"/>
    </location>
    <ligand>
        <name>ATP</name>
        <dbReference type="ChEBI" id="CHEBI:30616"/>
    </ligand>
</feature>
<feature type="binding site" evidence="1">
    <location>
        <position position="91"/>
    </location>
    <ligand>
        <name>L-citrulline</name>
        <dbReference type="ChEBI" id="CHEBI:57743"/>
    </ligand>
</feature>
<feature type="binding site" evidence="1">
    <location>
        <position position="96"/>
    </location>
    <ligand>
        <name>L-citrulline</name>
        <dbReference type="ChEBI" id="CHEBI:57743"/>
    </ligand>
</feature>
<feature type="binding site" evidence="1">
    <location>
        <position position="121"/>
    </location>
    <ligand>
        <name>ATP</name>
        <dbReference type="ChEBI" id="CHEBI:30616"/>
    </ligand>
</feature>
<feature type="binding site" evidence="1">
    <location>
        <position position="123"/>
    </location>
    <ligand>
        <name>L-aspartate</name>
        <dbReference type="ChEBI" id="CHEBI:29991"/>
    </ligand>
</feature>
<feature type="binding site" evidence="1">
    <location>
        <position position="127"/>
    </location>
    <ligand>
        <name>L-aspartate</name>
        <dbReference type="ChEBI" id="CHEBI:29991"/>
    </ligand>
</feature>
<feature type="binding site" evidence="1">
    <location>
        <position position="127"/>
    </location>
    <ligand>
        <name>L-citrulline</name>
        <dbReference type="ChEBI" id="CHEBI:57743"/>
    </ligand>
</feature>
<feature type="binding site" evidence="1">
    <location>
        <position position="128"/>
    </location>
    <ligand>
        <name>L-aspartate</name>
        <dbReference type="ChEBI" id="CHEBI:29991"/>
    </ligand>
</feature>
<feature type="binding site" evidence="1">
    <location>
        <position position="131"/>
    </location>
    <ligand>
        <name>L-citrulline</name>
        <dbReference type="ChEBI" id="CHEBI:57743"/>
    </ligand>
</feature>
<feature type="binding site" evidence="1">
    <location>
        <position position="181"/>
    </location>
    <ligand>
        <name>L-citrulline</name>
        <dbReference type="ChEBI" id="CHEBI:57743"/>
    </ligand>
</feature>
<feature type="binding site" evidence="1">
    <location>
        <position position="190"/>
    </location>
    <ligand>
        <name>L-citrulline</name>
        <dbReference type="ChEBI" id="CHEBI:57743"/>
    </ligand>
</feature>
<feature type="binding site" evidence="1">
    <location>
        <position position="266"/>
    </location>
    <ligand>
        <name>L-citrulline</name>
        <dbReference type="ChEBI" id="CHEBI:57743"/>
    </ligand>
</feature>
<feature type="binding site" evidence="1">
    <location>
        <position position="278"/>
    </location>
    <ligand>
        <name>L-citrulline</name>
        <dbReference type="ChEBI" id="CHEBI:57743"/>
    </ligand>
</feature>
<comment type="catalytic activity">
    <reaction evidence="1">
        <text>L-citrulline + L-aspartate + ATP = 2-(N(omega)-L-arginino)succinate + AMP + diphosphate + H(+)</text>
        <dbReference type="Rhea" id="RHEA:10932"/>
        <dbReference type="ChEBI" id="CHEBI:15378"/>
        <dbReference type="ChEBI" id="CHEBI:29991"/>
        <dbReference type="ChEBI" id="CHEBI:30616"/>
        <dbReference type="ChEBI" id="CHEBI:33019"/>
        <dbReference type="ChEBI" id="CHEBI:57472"/>
        <dbReference type="ChEBI" id="CHEBI:57743"/>
        <dbReference type="ChEBI" id="CHEBI:456215"/>
        <dbReference type="EC" id="6.3.4.5"/>
    </reaction>
</comment>
<comment type="pathway">
    <text evidence="1">Amino-acid biosynthesis; L-arginine biosynthesis; L-arginine from L-ornithine and carbamoyl phosphate: step 2/3.</text>
</comment>
<comment type="subunit">
    <text evidence="1">Homotetramer.</text>
</comment>
<comment type="subcellular location">
    <subcellularLocation>
        <location evidence="1">Cytoplasm</location>
    </subcellularLocation>
</comment>
<comment type="similarity">
    <text evidence="1">Belongs to the argininosuccinate synthase family. Type 1 subfamily.</text>
</comment>
<sequence>MKREVKKVVLAYSGGLDTSVILKWLQDEYKCEVVTFTADIGQGEEVEPARAKALALGIKPENIFIDDLREEFVKDYVFPMFRANAIYEGEYLLGTSIARPLIAKRQVEIAHLTNADGVSHGATGKGNDQVRFEMGYLSKDSTLTVIAPWREWDLNSREKLLAYAEEHGIQIEKKGKKSPYSMDANLLHISYEGGILEDPNAEPEDSMWLWTTKPEDAPNTPEYITIGYENGDPVSLNGEKLTPATMLETLNKIAGKHGIGRADIVENRYVGMKSRGCYETPGGTIMLKGHRAIESITLDREEAHLKDELMPRYAKLIYNGFWFSPEREMLQAAIDTTQKNVKGSVKLKLYKGSVMVVGRSSEFSLFNPEYCTFEEDAVYDQKDAAGFIKLNALRFIIAGKARKK</sequence>
<evidence type="ECO:0000255" key="1">
    <source>
        <dbReference type="HAMAP-Rule" id="MF_00005"/>
    </source>
</evidence>
<accession>Q30QT1</accession>
<organism>
    <name type="scientific">Sulfurimonas denitrificans (strain ATCC 33889 / DSM 1251)</name>
    <name type="common">Thiomicrospira denitrificans (strain ATCC 33889 / DSM 1251)</name>
    <dbReference type="NCBI Taxonomy" id="326298"/>
    <lineage>
        <taxon>Bacteria</taxon>
        <taxon>Pseudomonadati</taxon>
        <taxon>Campylobacterota</taxon>
        <taxon>Epsilonproteobacteria</taxon>
        <taxon>Campylobacterales</taxon>
        <taxon>Sulfurimonadaceae</taxon>
        <taxon>Sulfurimonas</taxon>
    </lineage>
</organism>